<accession>Q6G9Y3</accession>
<organism>
    <name type="scientific">Staphylococcus aureus (strain MSSA476)</name>
    <dbReference type="NCBI Taxonomy" id="282459"/>
    <lineage>
        <taxon>Bacteria</taxon>
        <taxon>Bacillati</taxon>
        <taxon>Bacillota</taxon>
        <taxon>Bacilli</taxon>
        <taxon>Bacillales</taxon>
        <taxon>Staphylococcaceae</taxon>
        <taxon>Staphylococcus</taxon>
    </lineage>
</organism>
<evidence type="ECO:0000250" key="1"/>
<evidence type="ECO:0000305" key="2"/>
<protein>
    <recommendedName>
        <fullName>Malonyl CoA-acyl carrier protein transacylase</fullName>
        <shortName>MCT</shortName>
        <ecNumber>2.3.1.39</ecNumber>
    </recommendedName>
</protein>
<comment type="catalytic activity">
    <reaction>
        <text>holo-[ACP] + malonyl-CoA = malonyl-[ACP] + CoA</text>
        <dbReference type="Rhea" id="RHEA:41792"/>
        <dbReference type="Rhea" id="RHEA-COMP:9623"/>
        <dbReference type="Rhea" id="RHEA-COMP:9685"/>
        <dbReference type="ChEBI" id="CHEBI:57287"/>
        <dbReference type="ChEBI" id="CHEBI:57384"/>
        <dbReference type="ChEBI" id="CHEBI:64479"/>
        <dbReference type="ChEBI" id="CHEBI:78449"/>
        <dbReference type="EC" id="2.3.1.39"/>
    </reaction>
</comment>
<comment type="pathway">
    <text>Lipid metabolism; fatty acid biosynthesis.</text>
</comment>
<comment type="similarity">
    <text evidence="2">Belongs to the FabD family.</text>
</comment>
<gene>
    <name type="primary">fabD</name>
    <name type="ordered locus">SAS1164</name>
</gene>
<name>FABD_STAAS</name>
<keyword id="KW-0012">Acyltransferase</keyword>
<keyword id="KW-0275">Fatty acid biosynthesis</keyword>
<keyword id="KW-0276">Fatty acid metabolism</keyword>
<keyword id="KW-0444">Lipid biosynthesis</keyword>
<keyword id="KW-0443">Lipid metabolism</keyword>
<keyword id="KW-0808">Transferase</keyword>
<sequence length="308" mass="33635">MSKTAIIFPGQGAQKVGMAQDLFNNNDQATEILTSAAKTLDFDILETMFTDEEGKLGETENTQPALLTHSSALLAALKNLNPDFTMGHSLGEYSSLVAADVLSFEDAVKIVRKRGQLMAQAFPTGVGSMAAVLGLDFDKVDEICKSLSSDDKIIEPANINCPGQIVVSGHKALIDELVEKGKSLGAKRVMPLAVSGPFHSSLMKVIEEDFSSYINQFEWRDAKFPVVQNVNAQGETDNEVIKSNMVKQLYSPVQFINSTEWLIDQGVDHFIEIGPGKVLSGLIKKINRDVKLTSIQTLEDVKGWNEND</sequence>
<reference key="1">
    <citation type="journal article" date="2004" name="Proc. Natl. Acad. Sci. U.S.A.">
        <title>Complete genomes of two clinical Staphylococcus aureus strains: evidence for the rapid evolution of virulence and drug resistance.</title>
        <authorList>
            <person name="Holden M.T.G."/>
            <person name="Feil E.J."/>
            <person name="Lindsay J.A."/>
            <person name="Peacock S.J."/>
            <person name="Day N.P.J."/>
            <person name="Enright M.C."/>
            <person name="Foster T.J."/>
            <person name="Moore C.E."/>
            <person name="Hurst L."/>
            <person name="Atkin R."/>
            <person name="Barron A."/>
            <person name="Bason N."/>
            <person name="Bentley S.D."/>
            <person name="Chillingworth C."/>
            <person name="Chillingworth T."/>
            <person name="Churcher C."/>
            <person name="Clark L."/>
            <person name="Corton C."/>
            <person name="Cronin A."/>
            <person name="Doggett J."/>
            <person name="Dowd L."/>
            <person name="Feltwell T."/>
            <person name="Hance Z."/>
            <person name="Harris B."/>
            <person name="Hauser H."/>
            <person name="Holroyd S."/>
            <person name="Jagels K."/>
            <person name="James K.D."/>
            <person name="Lennard N."/>
            <person name="Line A."/>
            <person name="Mayes R."/>
            <person name="Moule S."/>
            <person name="Mungall K."/>
            <person name="Ormond D."/>
            <person name="Quail M.A."/>
            <person name="Rabbinowitsch E."/>
            <person name="Rutherford K.M."/>
            <person name="Sanders M."/>
            <person name="Sharp S."/>
            <person name="Simmonds M."/>
            <person name="Stevens K."/>
            <person name="Whitehead S."/>
            <person name="Barrell B.G."/>
            <person name="Spratt B.G."/>
            <person name="Parkhill J."/>
        </authorList>
    </citation>
    <scope>NUCLEOTIDE SEQUENCE [LARGE SCALE GENOMIC DNA]</scope>
    <source>
        <strain>MSSA476</strain>
    </source>
</reference>
<feature type="chain" id="PRO_0000194223" description="Malonyl CoA-acyl carrier protein transacylase">
    <location>
        <begin position="1"/>
        <end position="308"/>
    </location>
</feature>
<feature type="active site" evidence="1">
    <location>
        <position position="89"/>
    </location>
</feature>
<feature type="active site" evidence="1">
    <location>
        <position position="199"/>
    </location>
</feature>
<proteinExistence type="inferred from homology"/>
<dbReference type="EC" id="2.3.1.39"/>
<dbReference type="EMBL" id="BX571857">
    <property type="protein sequence ID" value="CAG42941.1"/>
    <property type="molecule type" value="Genomic_DNA"/>
</dbReference>
<dbReference type="RefSeq" id="WP_000047344.1">
    <property type="nucleotide sequence ID" value="NC_002953.3"/>
</dbReference>
<dbReference type="SMR" id="Q6G9Y3"/>
<dbReference type="KEGG" id="sas:SAS1164"/>
<dbReference type="HOGENOM" id="CLU_030558_0_1_9"/>
<dbReference type="UniPathway" id="UPA00094"/>
<dbReference type="GO" id="GO:0005829">
    <property type="term" value="C:cytosol"/>
    <property type="evidence" value="ECO:0007669"/>
    <property type="project" value="TreeGrafter"/>
</dbReference>
<dbReference type="GO" id="GO:0004314">
    <property type="term" value="F:[acyl-carrier-protein] S-malonyltransferase activity"/>
    <property type="evidence" value="ECO:0007669"/>
    <property type="project" value="UniProtKB-EC"/>
</dbReference>
<dbReference type="GO" id="GO:0006633">
    <property type="term" value="P:fatty acid biosynthetic process"/>
    <property type="evidence" value="ECO:0007669"/>
    <property type="project" value="UniProtKB-UniPathway"/>
</dbReference>
<dbReference type="FunFam" id="3.30.70.250:FF:000001">
    <property type="entry name" value="Malonyl CoA-acyl carrier protein transacylase"/>
    <property type="match status" value="1"/>
</dbReference>
<dbReference type="Gene3D" id="3.30.70.250">
    <property type="entry name" value="Malonyl-CoA ACP transacylase, ACP-binding"/>
    <property type="match status" value="1"/>
</dbReference>
<dbReference type="Gene3D" id="3.40.366.10">
    <property type="entry name" value="Malonyl-Coenzyme A Acyl Carrier Protein, domain 2"/>
    <property type="match status" value="1"/>
</dbReference>
<dbReference type="InterPro" id="IPR001227">
    <property type="entry name" value="Ac_transferase_dom_sf"/>
</dbReference>
<dbReference type="InterPro" id="IPR014043">
    <property type="entry name" value="Acyl_transferase_dom"/>
</dbReference>
<dbReference type="InterPro" id="IPR016035">
    <property type="entry name" value="Acyl_Trfase/lysoPLipase"/>
</dbReference>
<dbReference type="InterPro" id="IPR050858">
    <property type="entry name" value="Mal-CoA-ACP_Trans/PKS_FabD"/>
</dbReference>
<dbReference type="InterPro" id="IPR024925">
    <property type="entry name" value="Malonyl_CoA-ACP_transAc"/>
</dbReference>
<dbReference type="InterPro" id="IPR004410">
    <property type="entry name" value="Malonyl_CoA-ACP_transAc_FabD"/>
</dbReference>
<dbReference type="InterPro" id="IPR016036">
    <property type="entry name" value="Malonyl_transacylase_ACP-bd"/>
</dbReference>
<dbReference type="NCBIfam" id="TIGR00128">
    <property type="entry name" value="fabD"/>
    <property type="match status" value="1"/>
</dbReference>
<dbReference type="PANTHER" id="PTHR42681">
    <property type="entry name" value="MALONYL-COA-ACYL CARRIER PROTEIN TRANSACYLASE, MITOCHONDRIAL"/>
    <property type="match status" value="1"/>
</dbReference>
<dbReference type="PANTHER" id="PTHR42681:SF1">
    <property type="entry name" value="MALONYL-COA-ACYL CARRIER PROTEIN TRANSACYLASE, MITOCHONDRIAL"/>
    <property type="match status" value="1"/>
</dbReference>
<dbReference type="Pfam" id="PF00698">
    <property type="entry name" value="Acyl_transf_1"/>
    <property type="match status" value="1"/>
</dbReference>
<dbReference type="PIRSF" id="PIRSF000446">
    <property type="entry name" value="Mct"/>
    <property type="match status" value="1"/>
</dbReference>
<dbReference type="SMART" id="SM00827">
    <property type="entry name" value="PKS_AT"/>
    <property type="match status" value="1"/>
</dbReference>
<dbReference type="SUPFAM" id="SSF52151">
    <property type="entry name" value="FabD/lysophospholipase-like"/>
    <property type="match status" value="1"/>
</dbReference>
<dbReference type="SUPFAM" id="SSF55048">
    <property type="entry name" value="Probable ACP-binding domain of malonyl-CoA ACP transacylase"/>
    <property type="match status" value="1"/>
</dbReference>